<feature type="chain" id="PRO_1000051955" description="Large ribosomal subunit protein uL2">
    <location>
        <begin position="1"/>
        <end position="277"/>
    </location>
</feature>
<feature type="region of interest" description="Disordered" evidence="2">
    <location>
        <begin position="36"/>
        <end position="55"/>
    </location>
</feature>
<feature type="region of interest" description="Disordered" evidence="2">
    <location>
        <begin position="213"/>
        <end position="277"/>
    </location>
</feature>
<comment type="function">
    <text evidence="1">One of the primary rRNA binding proteins. Required for association of the 30S and 50S subunits to form the 70S ribosome, for tRNA binding and peptide bond formation. It has been suggested to have peptidyltransferase activity; this is somewhat controversial. Makes several contacts with the 16S rRNA in the 70S ribosome.</text>
</comment>
<comment type="subunit">
    <text evidence="1">Part of the 50S ribosomal subunit. Forms a bridge to the 30S subunit in the 70S ribosome.</text>
</comment>
<comment type="similarity">
    <text evidence="1">Belongs to the universal ribosomal protein uL2 family.</text>
</comment>
<accession>A7X5G0</accession>
<proteinExistence type="inferred from homology"/>
<name>RL2_STAA1</name>
<gene>
    <name evidence="1" type="primary">rplB</name>
    <name type="ordered locus">SAHV_2231</name>
</gene>
<dbReference type="EMBL" id="AP009324">
    <property type="protein sequence ID" value="BAF79114.1"/>
    <property type="molecule type" value="Genomic_DNA"/>
</dbReference>
<dbReference type="RefSeq" id="WP_000985472.1">
    <property type="nucleotide sequence ID" value="NZ_CTYB01000025.1"/>
</dbReference>
<dbReference type="SMR" id="A7X5G0"/>
<dbReference type="GeneID" id="98346559"/>
<dbReference type="KEGG" id="saw:SAHV_2231"/>
<dbReference type="HOGENOM" id="CLU_036235_2_1_9"/>
<dbReference type="GO" id="GO:0015934">
    <property type="term" value="C:large ribosomal subunit"/>
    <property type="evidence" value="ECO:0007669"/>
    <property type="project" value="InterPro"/>
</dbReference>
<dbReference type="GO" id="GO:0019843">
    <property type="term" value="F:rRNA binding"/>
    <property type="evidence" value="ECO:0007669"/>
    <property type="project" value="UniProtKB-UniRule"/>
</dbReference>
<dbReference type="GO" id="GO:0003735">
    <property type="term" value="F:structural constituent of ribosome"/>
    <property type="evidence" value="ECO:0007669"/>
    <property type="project" value="InterPro"/>
</dbReference>
<dbReference type="GO" id="GO:0016740">
    <property type="term" value="F:transferase activity"/>
    <property type="evidence" value="ECO:0007669"/>
    <property type="project" value="InterPro"/>
</dbReference>
<dbReference type="GO" id="GO:0002181">
    <property type="term" value="P:cytoplasmic translation"/>
    <property type="evidence" value="ECO:0007669"/>
    <property type="project" value="TreeGrafter"/>
</dbReference>
<dbReference type="FunFam" id="2.30.30.30:FF:000001">
    <property type="entry name" value="50S ribosomal protein L2"/>
    <property type="match status" value="1"/>
</dbReference>
<dbReference type="FunFam" id="2.40.50.140:FF:000003">
    <property type="entry name" value="50S ribosomal protein L2"/>
    <property type="match status" value="1"/>
</dbReference>
<dbReference type="FunFam" id="4.10.950.10:FF:000001">
    <property type="entry name" value="50S ribosomal protein L2"/>
    <property type="match status" value="1"/>
</dbReference>
<dbReference type="Gene3D" id="2.30.30.30">
    <property type="match status" value="1"/>
</dbReference>
<dbReference type="Gene3D" id="2.40.50.140">
    <property type="entry name" value="Nucleic acid-binding proteins"/>
    <property type="match status" value="1"/>
</dbReference>
<dbReference type="Gene3D" id="4.10.950.10">
    <property type="entry name" value="Ribosomal protein L2, domain 3"/>
    <property type="match status" value="1"/>
</dbReference>
<dbReference type="HAMAP" id="MF_01320_B">
    <property type="entry name" value="Ribosomal_uL2_B"/>
    <property type="match status" value="1"/>
</dbReference>
<dbReference type="InterPro" id="IPR012340">
    <property type="entry name" value="NA-bd_OB-fold"/>
</dbReference>
<dbReference type="InterPro" id="IPR014722">
    <property type="entry name" value="Rib_uL2_dom2"/>
</dbReference>
<dbReference type="InterPro" id="IPR002171">
    <property type="entry name" value="Ribosomal_uL2"/>
</dbReference>
<dbReference type="InterPro" id="IPR005880">
    <property type="entry name" value="Ribosomal_uL2_bac/org-type"/>
</dbReference>
<dbReference type="InterPro" id="IPR022669">
    <property type="entry name" value="Ribosomal_uL2_C"/>
</dbReference>
<dbReference type="InterPro" id="IPR022671">
    <property type="entry name" value="Ribosomal_uL2_CS"/>
</dbReference>
<dbReference type="InterPro" id="IPR014726">
    <property type="entry name" value="Ribosomal_uL2_dom3"/>
</dbReference>
<dbReference type="InterPro" id="IPR022666">
    <property type="entry name" value="Ribosomal_uL2_RNA-bd_dom"/>
</dbReference>
<dbReference type="InterPro" id="IPR008991">
    <property type="entry name" value="Translation_prot_SH3-like_sf"/>
</dbReference>
<dbReference type="NCBIfam" id="TIGR01171">
    <property type="entry name" value="rplB_bact"/>
    <property type="match status" value="1"/>
</dbReference>
<dbReference type="PANTHER" id="PTHR13691:SF5">
    <property type="entry name" value="LARGE RIBOSOMAL SUBUNIT PROTEIN UL2M"/>
    <property type="match status" value="1"/>
</dbReference>
<dbReference type="PANTHER" id="PTHR13691">
    <property type="entry name" value="RIBOSOMAL PROTEIN L2"/>
    <property type="match status" value="1"/>
</dbReference>
<dbReference type="Pfam" id="PF00181">
    <property type="entry name" value="Ribosomal_L2"/>
    <property type="match status" value="1"/>
</dbReference>
<dbReference type="Pfam" id="PF03947">
    <property type="entry name" value="Ribosomal_L2_C"/>
    <property type="match status" value="1"/>
</dbReference>
<dbReference type="PIRSF" id="PIRSF002158">
    <property type="entry name" value="Ribosomal_L2"/>
    <property type="match status" value="1"/>
</dbReference>
<dbReference type="SMART" id="SM01383">
    <property type="entry name" value="Ribosomal_L2"/>
    <property type="match status" value="1"/>
</dbReference>
<dbReference type="SMART" id="SM01382">
    <property type="entry name" value="Ribosomal_L2_C"/>
    <property type="match status" value="1"/>
</dbReference>
<dbReference type="SUPFAM" id="SSF50249">
    <property type="entry name" value="Nucleic acid-binding proteins"/>
    <property type="match status" value="1"/>
</dbReference>
<dbReference type="SUPFAM" id="SSF50104">
    <property type="entry name" value="Translation proteins SH3-like domain"/>
    <property type="match status" value="1"/>
</dbReference>
<dbReference type="PROSITE" id="PS00467">
    <property type="entry name" value="RIBOSOMAL_L2"/>
    <property type="match status" value="1"/>
</dbReference>
<reference key="1">
    <citation type="journal article" date="2008" name="Antimicrob. Agents Chemother.">
        <title>Mutated response regulator graR is responsible for phenotypic conversion of Staphylococcus aureus from heterogeneous vancomycin-intermediate resistance to vancomycin-intermediate resistance.</title>
        <authorList>
            <person name="Neoh H.-M."/>
            <person name="Cui L."/>
            <person name="Yuzawa H."/>
            <person name="Takeuchi F."/>
            <person name="Matsuo M."/>
            <person name="Hiramatsu K."/>
        </authorList>
    </citation>
    <scope>NUCLEOTIDE SEQUENCE [LARGE SCALE GENOMIC DNA]</scope>
    <source>
        <strain>Mu3 / ATCC 700698</strain>
    </source>
</reference>
<sequence length="277" mass="30155">MAIKKYKPITNGRRNMTSLDFAEITKTTPEKSLLKPLPKKAGRNNQGKLTVRHHGGGHKRQYRVIDFKRNKDGINAKVDSIQYDPNRSANIALVVYADGEKRYIIAPKGLEVGQIVESGAEADIKVGNALPLQNIPVGTVVHNIELKPGKGGQIARSAGASAQVLGKEGKYVLIRLRSGEVRMILSTCRATIGQVGNLQHELVNVGKAGRSRWKGIRPTVRGSVMNPNDHPHGGGEGRAPIGRPSPMSPWGKPTLGKKTRRGKKSSDKLIVRGRKKK</sequence>
<evidence type="ECO:0000255" key="1">
    <source>
        <dbReference type="HAMAP-Rule" id="MF_01320"/>
    </source>
</evidence>
<evidence type="ECO:0000256" key="2">
    <source>
        <dbReference type="SAM" id="MobiDB-lite"/>
    </source>
</evidence>
<evidence type="ECO:0000305" key="3"/>
<keyword id="KW-0687">Ribonucleoprotein</keyword>
<keyword id="KW-0689">Ribosomal protein</keyword>
<keyword id="KW-0694">RNA-binding</keyword>
<keyword id="KW-0699">rRNA-binding</keyword>
<protein>
    <recommendedName>
        <fullName evidence="1">Large ribosomal subunit protein uL2</fullName>
    </recommendedName>
    <alternativeName>
        <fullName evidence="3">50S ribosomal protein L2</fullName>
    </alternativeName>
</protein>
<organism>
    <name type="scientific">Staphylococcus aureus (strain Mu3 / ATCC 700698)</name>
    <dbReference type="NCBI Taxonomy" id="418127"/>
    <lineage>
        <taxon>Bacteria</taxon>
        <taxon>Bacillati</taxon>
        <taxon>Bacillota</taxon>
        <taxon>Bacilli</taxon>
        <taxon>Bacillales</taxon>
        <taxon>Staphylococcaceae</taxon>
        <taxon>Staphylococcus</taxon>
    </lineage>
</organism>